<protein>
    <recommendedName>
        <fullName evidence="1">Chaperone protein DnaJ</fullName>
    </recommendedName>
</protein>
<gene>
    <name evidence="1" type="primary">dnaJ</name>
    <name type="ordered locus">spr0456</name>
</gene>
<organism>
    <name type="scientific">Streptococcus pneumoniae (strain ATCC BAA-255 / R6)</name>
    <dbReference type="NCBI Taxonomy" id="171101"/>
    <lineage>
        <taxon>Bacteria</taxon>
        <taxon>Bacillati</taxon>
        <taxon>Bacillota</taxon>
        <taxon>Bacilli</taxon>
        <taxon>Lactobacillales</taxon>
        <taxon>Streptococcaceae</taxon>
        <taxon>Streptococcus</taxon>
    </lineage>
</organism>
<comment type="function">
    <text evidence="1">Participates actively in the response to hyperosmotic and heat shock by preventing the aggregation of stress-denatured proteins and by disaggregating proteins, also in an autonomous, DnaK-independent fashion. Unfolded proteins bind initially to DnaJ; upon interaction with the DnaJ-bound protein, DnaK hydrolyzes its bound ATP, resulting in the formation of a stable complex. GrpE releases ADP from DnaK; ATP binding to DnaK triggers the release of the substrate protein, thus completing the reaction cycle. Several rounds of ATP-dependent interactions between DnaJ, DnaK and GrpE are required for fully efficient folding. Also involved, together with DnaK and GrpE, in the DNA replication of plasmids through activation of initiation proteins.</text>
</comment>
<comment type="cofactor">
    <cofactor evidence="1">
        <name>Zn(2+)</name>
        <dbReference type="ChEBI" id="CHEBI:29105"/>
    </cofactor>
    <text evidence="1">Binds 2 Zn(2+) ions per monomer.</text>
</comment>
<comment type="subunit">
    <text evidence="1">Homodimer.</text>
</comment>
<comment type="subcellular location">
    <subcellularLocation>
        <location evidence="1">Cytoplasm</location>
    </subcellularLocation>
</comment>
<comment type="domain">
    <text evidence="1">The J domain is necessary and sufficient to stimulate DnaK ATPase activity. Zinc center 1 plays an important role in the autonomous, DnaK-independent chaperone activity of DnaJ. Zinc center 2 is essential for interaction with DnaK and for DnaJ activity.</text>
</comment>
<comment type="similarity">
    <text evidence="1">Belongs to the DnaJ family.</text>
</comment>
<evidence type="ECO:0000255" key="1">
    <source>
        <dbReference type="HAMAP-Rule" id="MF_01152"/>
    </source>
</evidence>
<accession>Q8CWT2</accession>
<proteinExistence type="inferred from homology"/>
<reference key="1">
    <citation type="journal article" date="2001" name="J. Bacteriol.">
        <title>Genome of the bacterium Streptococcus pneumoniae strain R6.</title>
        <authorList>
            <person name="Hoskins J."/>
            <person name="Alborn W.E. Jr."/>
            <person name="Arnold J."/>
            <person name="Blaszczak L.C."/>
            <person name="Burgett S."/>
            <person name="DeHoff B.S."/>
            <person name="Estrem S.T."/>
            <person name="Fritz L."/>
            <person name="Fu D.-J."/>
            <person name="Fuller W."/>
            <person name="Geringer C."/>
            <person name="Gilmour R."/>
            <person name="Glass J.S."/>
            <person name="Khoja H."/>
            <person name="Kraft A.R."/>
            <person name="Lagace R.E."/>
            <person name="LeBlanc D.J."/>
            <person name="Lee L.N."/>
            <person name="Lefkowitz E.J."/>
            <person name="Lu J."/>
            <person name="Matsushima P."/>
            <person name="McAhren S.M."/>
            <person name="McHenney M."/>
            <person name="McLeaster K."/>
            <person name="Mundy C.W."/>
            <person name="Nicas T.I."/>
            <person name="Norris F.H."/>
            <person name="O'Gara M."/>
            <person name="Peery R.B."/>
            <person name="Robertson G.T."/>
            <person name="Rockey P."/>
            <person name="Sun P.-M."/>
            <person name="Winkler M.E."/>
            <person name="Yang Y."/>
            <person name="Young-Bellido M."/>
            <person name="Zhao G."/>
            <person name="Zook C.A."/>
            <person name="Baltz R.H."/>
            <person name="Jaskunas S.R."/>
            <person name="Rosteck P.R. Jr."/>
            <person name="Skatrud P.L."/>
            <person name="Glass J.I."/>
        </authorList>
    </citation>
    <scope>NUCLEOTIDE SEQUENCE [LARGE SCALE GENOMIC DNA]</scope>
    <source>
        <strain>ATCC BAA-255 / R6</strain>
    </source>
</reference>
<sequence>MNNTEFYDRLGVSKNASADEIKKAYRKLSKKYHPDINKEPGAEDKYKEVQEAYETLSDDQKRAAYDQYGAAGANGGFGGFNGAGGFGGFEDIFSSFFGGGGSSRNPNAPRQGDDLQYRVNLTFEEAIFGTEKEVKYHREAGCRTCNGSGAKPGTSPVTCGRCHGAGVINVDTQTPLGMMRRQVTCDVCHGRGKEIKYPCTTCHGTGHEKQAHSVHVKIPAGVETGQQIRLAGQGEAGFNGGPYGDLYVVVSVEASDKFEREGTTIFYNLNLNFVQAALGDTVDIPTVHGDVELVIPEGTQTGKKFRLRSKGAPSLRGGAVGDQYVTVNVVTPTGLNDRQKVALKEFAAAGDLKVNPKKKGFFDHIKDAFDGE</sequence>
<feature type="chain" id="PRO_0000070902" description="Chaperone protein DnaJ">
    <location>
        <begin position="1"/>
        <end position="372"/>
    </location>
</feature>
<feature type="domain" description="J" evidence="1">
    <location>
        <begin position="5"/>
        <end position="69"/>
    </location>
</feature>
<feature type="repeat" description="CXXCXGXG motif">
    <location>
        <begin position="142"/>
        <end position="149"/>
    </location>
</feature>
<feature type="repeat" description="CXXCXGXG motif">
    <location>
        <begin position="159"/>
        <end position="166"/>
    </location>
</feature>
<feature type="repeat" description="CXXCXGXG motif">
    <location>
        <begin position="185"/>
        <end position="192"/>
    </location>
</feature>
<feature type="repeat" description="CXXCXGXG motif">
    <location>
        <begin position="199"/>
        <end position="206"/>
    </location>
</feature>
<feature type="zinc finger region" description="CR-type" evidence="1">
    <location>
        <begin position="129"/>
        <end position="211"/>
    </location>
</feature>
<feature type="binding site" evidence="1">
    <location>
        <position position="142"/>
    </location>
    <ligand>
        <name>Zn(2+)</name>
        <dbReference type="ChEBI" id="CHEBI:29105"/>
        <label>1</label>
    </ligand>
</feature>
<feature type="binding site" evidence="1">
    <location>
        <position position="145"/>
    </location>
    <ligand>
        <name>Zn(2+)</name>
        <dbReference type="ChEBI" id="CHEBI:29105"/>
        <label>1</label>
    </ligand>
</feature>
<feature type="binding site" evidence="1">
    <location>
        <position position="159"/>
    </location>
    <ligand>
        <name>Zn(2+)</name>
        <dbReference type="ChEBI" id="CHEBI:29105"/>
        <label>2</label>
    </ligand>
</feature>
<feature type="binding site" evidence="1">
    <location>
        <position position="162"/>
    </location>
    <ligand>
        <name>Zn(2+)</name>
        <dbReference type="ChEBI" id="CHEBI:29105"/>
        <label>2</label>
    </ligand>
</feature>
<feature type="binding site" evidence="1">
    <location>
        <position position="185"/>
    </location>
    <ligand>
        <name>Zn(2+)</name>
        <dbReference type="ChEBI" id="CHEBI:29105"/>
        <label>2</label>
    </ligand>
</feature>
<feature type="binding site" evidence="1">
    <location>
        <position position="188"/>
    </location>
    <ligand>
        <name>Zn(2+)</name>
        <dbReference type="ChEBI" id="CHEBI:29105"/>
        <label>2</label>
    </ligand>
</feature>
<feature type="binding site" evidence="1">
    <location>
        <position position="199"/>
    </location>
    <ligand>
        <name>Zn(2+)</name>
        <dbReference type="ChEBI" id="CHEBI:29105"/>
        <label>1</label>
    </ligand>
</feature>
<feature type="binding site" evidence="1">
    <location>
        <position position="202"/>
    </location>
    <ligand>
        <name>Zn(2+)</name>
        <dbReference type="ChEBI" id="CHEBI:29105"/>
        <label>1</label>
    </ligand>
</feature>
<dbReference type="EMBL" id="AE007317">
    <property type="protein sequence ID" value="AAK99260.1"/>
    <property type="molecule type" value="Genomic_DNA"/>
</dbReference>
<dbReference type="PIR" id="H97928">
    <property type="entry name" value="H97928"/>
</dbReference>
<dbReference type="RefSeq" id="NP_358050.1">
    <property type="nucleotide sequence ID" value="NC_003098.1"/>
</dbReference>
<dbReference type="RefSeq" id="WP_001066302.1">
    <property type="nucleotide sequence ID" value="NC_003098.1"/>
</dbReference>
<dbReference type="SMR" id="Q8CWT2"/>
<dbReference type="STRING" id="171101.spr0456"/>
<dbReference type="KEGG" id="spr:spr0456"/>
<dbReference type="PATRIC" id="fig|171101.6.peg.503"/>
<dbReference type="eggNOG" id="COG0484">
    <property type="taxonomic scope" value="Bacteria"/>
</dbReference>
<dbReference type="HOGENOM" id="CLU_017633_0_7_9"/>
<dbReference type="Proteomes" id="UP000000586">
    <property type="component" value="Chromosome"/>
</dbReference>
<dbReference type="GO" id="GO:0005737">
    <property type="term" value="C:cytoplasm"/>
    <property type="evidence" value="ECO:0000318"/>
    <property type="project" value="GO_Central"/>
</dbReference>
<dbReference type="GO" id="GO:0005524">
    <property type="term" value="F:ATP binding"/>
    <property type="evidence" value="ECO:0007669"/>
    <property type="project" value="InterPro"/>
</dbReference>
<dbReference type="GO" id="GO:0031072">
    <property type="term" value="F:heat shock protein binding"/>
    <property type="evidence" value="ECO:0007669"/>
    <property type="project" value="InterPro"/>
</dbReference>
<dbReference type="GO" id="GO:0051082">
    <property type="term" value="F:unfolded protein binding"/>
    <property type="evidence" value="ECO:0000318"/>
    <property type="project" value="GO_Central"/>
</dbReference>
<dbReference type="GO" id="GO:0008270">
    <property type="term" value="F:zinc ion binding"/>
    <property type="evidence" value="ECO:0007669"/>
    <property type="project" value="UniProtKB-UniRule"/>
</dbReference>
<dbReference type="GO" id="GO:0051085">
    <property type="term" value="P:chaperone cofactor-dependent protein refolding"/>
    <property type="evidence" value="ECO:0000318"/>
    <property type="project" value="GO_Central"/>
</dbReference>
<dbReference type="GO" id="GO:0006260">
    <property type="term" value="P:DNA replication"/>
    <property type="evidence" value="ECO:0007669"/>
    <property type="project" value="UniProtKB-KW"/>
</dbReference>
<dbReference type="GO" id="GO:0042026">
    <property type="term" value="P:protein refolding"/>
    <property type="evidence" value="ECO:0000318"/>
    <property type="project" value="GO_Central"/>
</dbReference>
<dbReference type="GO" id="GO:0009408">
    <property type="term" value="P:response to heat"/>
    <property type="evidence" value="ECO:0007669"/>
    <property type="project" value="InterPro"/>
</dbReference>
<dbReference type="CDD" id="cd06257">
    <property type="entry name" value="DnaJ"/>
    <property type="match status" value="1"/>
</dbReference>
<dbReference type="CDD" id="cd10747">
    <property type="entry name" value="DnaJ_C"/>
    <property type="match status" value="1"/>
</dbReference>
<dbReference type="CDD" id="cd10719">
    <property type="entry name" value="DnaJ_zf"/>
    <property type="match status" value="1"/>
</dbReference>
<dbReference type="FunFam" id="1.10.287.110:FF:000031">
    <property type="entry name" value="Molecular chaperone DnaJ"/>
    <property type="match status" value="1"/>
</dbReference>
<dbReference type="FunFam" id="2.10.230.10:FF:000002">
    <property type="entry name" value="Molecular chaperone DnaJ"/>
    <property type="match status" value="1"/>
</dbReference>
<dbReference type="FunFam" id="2.60.260.20:FF:000004">
    <property type="entry name" value="Molecular chaperone DnaJ"/>
    <property type="match status" value="1"/>
</dbReference>
<dbReference type="Gene3D" id="1.10.287.110">
    <property type="entry name" value="DnaJ domain"/>
    <property type="match status" value="1"/>
</dbReference>
<dbReference type="Gene3D" id="2.10.230.10">
    <property type="entry name" value="Heat shock protein DnaJ, cysteine-rich domain"/>
    <property type="match status" value="1"/>
</dbReference>
<dbReference type="Gene3D" id="2.60.260.20">
    <property type="entry name" value="Urease metallochaperone UreE, N-terminal domain"/>
    <property type="match status" value="2"/>
</dbReference>
<dbReference type="HAMAP" id="MF_01152">
    <property type="entry name" value="DnaJ"/>
    <property type="match status" value="1"/>
</dbReference>
<dbReference type="InterPro" id="IPR012724">
    <property type="entry name" value="DnaJ"/>
</dbReference>
<dbReference type="InterPro" id="IPR002939">
    <property type="entry name" value="DnaJ_C"/>
</dbReference>
<dbReference type="InterPro" id="IPR001623">
    <property type="entry name" value="DnaJ_domain"/>
</dbReference>
<dbReference type="InterPro" id="IPR018253">
    <property type="entry name" value="DnaJ_domain_CS"/>
</dbReference>
<dbReference type="InterPro" id="IPR008971">
    <property type="entry name" value="HSP40/DnaJ_pept-bd"/>
</dbReference>
<dbReference type="InterPro" id="IPR001305">
    <property type="entry name" value="HSP_DnaJ_Cys-rich_dom"/>
</dbReference>
<dbReference type="InterPro" id="IPR036410">
    <property type="entry name" value="HSP_DnaJ_Cys-rich_dom_sf"/>
</dbReference>
<dbReference type="InterPro" id="IPR036869">
    <property type="entry name" value="J_dom_sf"/>
</dbReference>
<dbReference type="NCBIfam" id="TIGR02349">
    <property type="entry name" value="DnaJ_bact"/>
    <property type="match status" value="1"/>
</dbReference>
<dbReference type="NCBIfam" id="NF008035">
    <property type="entry name" value="PRK10767.1"/>
    <property type="match status" value="1"/>
</dbReference>
<dbReference type="NCBIfam" id="NF010869">
    <property type="entry name" value="PRK14276.1"/>
    <property type="match status" value="1"/>
</dbReference>
<dbReference type="PANTHER" id="PTHR43096:SF48">
    <property type="entry name" value="CHAPERONE PROTEIN DNAJ"/>
    <property type="match status" value="1"/>
</dbReference>
<dbReference type="PANTHER" id="PTHR43096">
    <property type="entry name" value="DNAJ HOMOLOG 1, MITOCHONDRIAL-RELATED"/>
    <property type="match status" value="1"/>
</dbReference>
<dbReference type="Pfam" id="PF00226">
    <property type="entry name" value="DnaJ"/>
    <property type="match status" value="1"/>
</dbReference>
<dbReference type="Pfam" id="PF01556">
    <property type="entry name" value="DnaJ_C"/>
    <property type="match status" value="1"/>
</dbReference>
<dbReference type="Pfam" id="PF00684">
    <property type="entry name" value="DnaJ_CXXCXGXG"/>
    <property type="match status" value="1"/>
</dbReference>
<dbReference type="PRINTS" id="PR00625">
    <property type="entry name" value="JDOMAIN"/>
</dbReference>
<dbReference type="SMART" id="SM00271">
    <property type="entry name" value="DnaJ"/>
    <property type="match status" value="1"/>
</dbReference>
<dbReference type="SUPFAM" id="SSF46565">
    <property type="entry name" value="Chaperone J-domain"/>
    <property type="match status" value="1"/>
</dbReference>
<dbReference type="SUPFAM" id="SSF57938">
    <property type="entry name" value="DnaJ/Hsp40 cysteine-rich domain"/>
    <property type="match status" value="1"/>
</dbReference>
<dbReference type="SUPFAM" id="SSF49493">
    <property type="entry name" value="HSP40/DnaJ peptide-binding domain"/>
    <property type="match status" value="2"/>
</dbReference>
<dbReference type="PROSITE" id="PS00636">
    <property type="entry name" value="DNAJ_1"/>
    <property type="match status" value="1"/>
</dbReference>
<dbReference type="PROSITE" id="PS50076">
    <property type="entry name" value="DNAJ_2"/>
    <property type="match status" value="1"/>
</dbReference>
<dbReference type="PROSITE" id="PS51188">
    <property type="entry name" value="ZF_CR"/>
    <property type="match status" value="1"/>
</dbReference>
<keyword id="KW-0143">Chaperone</keyword>
<keyword id="KW-0963">Cytoplasm</keyword>
<keyword id="KW-0235">DNA replication</keyword>
<keyword id="KW-0479">Metal-binding</keyword>
<keyword id="KW-1185">Reference proteome</keyword>
<keyword id="KW-0677">Repeat</keyword>
<keyword id="KW-0346">Stress response</keyword>
<keyword id="KW-0862">Zinc</keyword>
<keyword id="KW-0863">Zinc-finger</keyword>
<name>DNAJ_STRR6</name>